<accession>A8AYZ9</accession>
<organism>
    <name type="scientific">Streptococcus gordonii (strain Challis / ATCC 35105 / BCRC 15272 / CH1 / DL1 / V288)</name>
    <dbReference type="NCBI Taxonomy" id="467705"/>
    <lineage>
        <taxon>Bacteria</taxon>
        <taxon>Bacillati</taxon>
        <taxon>Bacillota</taxon>
        <taxon>Bacilli</taxon>
        <taxon>Lactobacillales</taxon>
        <taxon>Streptococcaceae</taxon>
        <taxon>Streptococcus</taxon>
    </lineage>
</organism>
<evidence type="ECO:0000255" key="1">
    <source>
        <dbReference type="HAMAP-Rule" id="MF_00373"/>
    </source>
</evidence>
<evidence type="ECO:0000305" key="2"/>
<reference key="1">
    <citation type="journal article" date="2007" name="J. Bacteriol.">
        <title>Genome-wide transcriptional changes in Streptococcus gordonii in response to competence signaling peptide.</title>
        <authorList>
            <person name="Vickerman M.M."/>
            <person name="Iobst S."/>
            <person name="Jesionowski A.M."/>
            <person name="Gill S.R."/>
        </authorList>
    </citation>
    <scope>NUCLEOTIDE SEQUENCE [LARGE SCALE GENOMIC DNA]</scope>
    <source>
        <strain>Challis / ATCC 35105 / BCRC 15272 / CH1 / DL1 / V288</strain>
    </source>
</reference>
<gene>
    <name evidence="1" type="primary">rpmB</name>
    <name type="ordered locus">SGO_1737</name>
</gene>
<proteinExistence type="inferred from homology"/>
<dbReference type="EMBL" id="CP000725">
    <property type="protein sequence ID" value="ABV10174.1"/>
    <property type="molecule type" value="Genomic_DNA"/>
</dbReference>
<dbReference type="RefSeq" id="WP_001140948.1">
    <property type="nucleotide sequence ID" value="NC_009785.1"/>
</dbReference>
<dbReference type="SMR" id="A8AYZ9"/>
<dbReference type="STRING" id="467705.SGO_1737"/>
<dbReference type="GeneID" id="93921138"/>
<dbReference type="KEGG" id="sgo:SGO_1737"/>
<dbReference type="eggNOG" id="COG0227">
    <property type="taxonomic scope" value="Bacteria"/>
</dbReference>
<dbReference type="HOGENOM" id="CLU_064548_7_1_9"/>
<dbReference type="Proteomes" id="UP000001131">
    <property type="component" value="Chromosome"/>
</dbReference>
<dbReference type="GO" id="GO:1990904">
    <property type="term" value="C:ribonucleoprotein complex"/>
    <property type="evidence" value="ECO:0007669"/>
    <property type="project" value="UniProtKB-KW"/>
</dbReference>
<dbReference type="GO" id="GO:0005840">
    <property type="term" value="C:ribosome"/>
    <property type="evidence" value="ECO:0007669"/>
    <property type="project" value="UniProtKB-KW"/>
</dbReference>
<dbReference type="GO" id="GO:0003735">
    <property type="term" value="F:structural constituent of ribosome"/>
    <property type="evidence" value="ECO:0007669"/>
    <property type="project" value="InterPro"/>
</dbReference>
<dbReference type="GO" id="GO:0006412">
    <property type="term" value="P:translation"/>
    <property type="evidence" value="ECO:0007669"/>
    <property type="project" value="UniProtKB-UniRule"/>
</dbReference>
<dbReference type="Gene3D" id="2.30.170.40">
    <property type="entry name" value="Ribosomal protein L28/L24"/>
    <property type="match status" value="1"/>
</dbReference>
<dbReference type="HAMAP" id="MF_00373">
    <property type="entry name" value="Ribosomal_bL28"/>
    <property type="match status" value="1"/>
</dbReference>
<dbReference type="InterPro" id="IPR050096">
    <property type="entry name" value="Bacterial_rp_bL28"/>
</dbReference>
<dbReference type="InterPro" id="IPR026569">
    <property type="entry name" value="Ribosomal_bL28"/>
</dbReference>
<dbReference type="InterPro" id="IPR034704">
    <property type="entry name" value="Ribosomal_bL28/bL31-like_sf"/>
</dbReference>
<dbReference type="InterPro" id="IPR001383">
    <property type="entry name" value="Ribosomal_bL28_bact-type"/>
</dbReference>
<dbReference type="InterPro" id="IPR037147">
    <property type="entry name" value="Ribosomal_bL28_sf"/>
</dbReference>
<dbReference type="NCBIfam" id="TIGR00009">
    <property type="entry name" value="L28"/>
    <property type="match status" value="1"/>
</dbReference>
<dbReference type="PANTHER" id="PTHR39080">
    <property type="entry name" value="50S RIBOSOMAL PROTEIN L28"/>
    <property type="match status" value="1"/>
</dbReference>
<dbReference type="PANTHER" id="PTHR39080:SF1">
    <property type="entry name" value="LARGE RIBOSOMAL SUBUNIT PROTEIN BL28A"/>
    <property type="match status" value="1"/>
</dbReference>
<dbReference type="Pfam" id="PF00830">
    <property type="entry name" value="Ribosomal_L28"/>
    <property type="match status" value="1"/>
</dbReference>
<dbReference type="SUPFAM" id="SSF143800">
    <property type="entry name" value="L28p-like"/>
    <property type="match status" value="1"/>
</dbReference>
<protein>
    <recommendedName>
        <fullName evidence="1">Large ribosomal subunit protein bL28</fullName>
    </recommendedName>
    <alternativeName>
        <fullName evidence="2">50S ribosomal protein L28</fullName>
    </alternativeName>
</protein>
<feature type="chain" id="PRO_1000079868" description="Large ribosomal subunit protein bL28">
    <location>
        <begin position="1"/>
        <end position="62"/>
    </location>
</feature>
<keyword id="KW-1185">Reference proteome</keyword>
<keyword id="KW-0687">Ribonucleoprotein</keyword>
<keyword id="KW-0689">Ribosomal protein</keyword>
<comment type="similarity">
    <text evidence="1">Belongs to the bacterial ribosomal protein bL28 family.</text>
</comment>
<sequence length="62" mass="6884">MAKVCYFTGRKTVSGNNRSHAMNQTKRAVKPNLQKVTVLIDGKPKKVWASARALKSGKVERV</sequence>
<name>RL28_STRGC</name>